<dbReference type="EMBL" id="AF125535">
    <property type="protein sequence ID" value="AAF17229.1"/>
    <property type="molecule type" value="mRNA"/>
</dbReference>
<dbReference type="EMBL" id="AK312190">
    <property type="protein sequence ID" value="BAG35123.1"/>
    <property type="molecule type" value="mRNA"/>
</dbReference>
<dbReference type="EMBL" id="Z92846">
    <property type="status" value="NOT_ANNOTATED_CDS"/>
    <property type="molecule type" value="Genomic_DNA"/>
</dbReference>
<dbReference type="EMBL" id="CH471190">
    <property type="protein sequence ID" value="EAW54713.1"/>
    <property type="molecule type" value="Genomic_DNA"/>
</dbReference>
<dbReference type="EMBL" id="BC023544">
    <property type="protein sequence ID" value="AAH23544.1"/>
    <property type="molecule type" value="mRNA"/>
</dbReference>
<dbReference type="CCDS" id="CCDS14507.1"/>
<dbReference type="RefSeq" id="NP_001006613.1">
    <property type="nucleotide sequence ID" value="NM_001006612.2"/>
</dbReference>
<dbReference type="RefSeq" id="NP_001006614.1">
    <property type="nucleotide sequence ID" value="NM_001006613.2"/>
</dbReference>
<dbReference type="RefSeq" id="NP_001006615.1">
    <property type="nucleotide sequence ID" value="NM_001006614.2"/>
</dbReference>
<dbReference type="RefSeq" id="NP_057387.1">
    <property type="nucleotide sequence ID" value="NM_016303.3"/>
</dbReference>
<dbReference type="BioGRID" id="119361">
    <property type="interactions" value="33"/>
</dbReference>
<dbReference type="FunCoup" id="Q9UHQ7">
    <property type="interactions" value="42"/>
</dbReference>
<dbReference type="IntAct" id="Q9UHQ7">
    <property type="interactions" value="22"/>
</dbReference>
<dbReference type="STRING" id="9606.ENSP00000496422"/>
<dbReference type="iPTMnet" id="Q9UHQ7"/>
<dbReference type="PhosphoSitePlus" id="Q9UHQ7"/>
<dbReference type="BioMuta" id="TCEAL9"/>
<dbReference type="DMDM" id="74762771"/>
<dbReference type="jPOST" id="Q9UHQ7"/>
<dbReference type="MassIVE" id="Q9UHQ7"/>
<dbReference type="PaxDb" id="9606-ENSP00000361745"/>
<dbReference type="PeptideAtlas" id="Q9UHQ7"/>
<dbReference type="ProteomicsDB" id="84400"/>
<dbReference type="Pumba" id="Q9UHQ7"/>
<dbReference type="Antibodypedia" id="1302">
    <property type="antibodies" value="57 antibodies from 14 providers"/>
</dbReference>
<dbReference type="DNASU" id="51186"/>
<dbReference type="Ensembl" id="ENST00000372656.5">
    <property type="protein sequence ID" value="ENSP00000361740.3"/>
    <property type="gene ID" value="ENSG00000185222.10"/>
</dbReference>
<dbReference type="Ensembl" id="ENST00000372661.6">
    <property type="protein sequence ID" value="ENSP00000361745.3"/>
    <property type="gene ID" value="ENSG00000185222.10"/>
</dbReference>
<dbReference type="Ensembl" id="ENST00000646896.1">
    <property type="protein sequence ID" value="ENSP00000496422.1"/>
    <property type="gene ID" value="ENSG00000185222.10"/>
</dbReference>
<dbReference type="GeneID" id="51186"/>
<dbReference type="KEGG" id="hsa:51186"/>
<dbReference type="MANE-Select" id="ENST00000372661.6">
    <property type="protein sequence ID" value="ENSP00000361745.3"/>
    <property type="RefSeq nucleotide sequence ID" value="NM_016303.3"/>
    <property type="RefSeq protein sequence ID" value="NP_057387.1"/>
</dbReference>
<dbReference type="UCSC" id="uc004eke.4">
    <property type="organism name" value="human"/>
</dbReference>
<dbReference type="AGR" id="HGNC:30084"/>
<dbReference type="CTD" id="51186"/>
<dbReference type="DisGeNET" id="51186"/>
<dbReference type="GeneCards" id="TCEAL9"/>
<dbReference type="HGNC" id="HGNC:30084">
    <property type="gene designation" value="TCEAL9"/>
</dbReference>
<dbReference type="HPA" id="ENSG00000185222">
    <property type="expression patterns" value="Low tissue specificity"/>
</dbReference>
<dbReference type="neXtProt" id="NX_Q9UHQ7"/>
<dbReference type="OpenTargets" id="ENSG00000185222"/>
<dbReference type="PharmGKB" id="PA134921975"/>
<dbReference type="VEuPathDB" id="HostDB:ENSG00000185222"/>
<dbReference type="eggNOG" id="ENOG502R6G6">
    <property type="taxonomic scope" value="Eukaryota"/>
</dbReference>
<dbReference type="GeneTree" id="ENSGT00950000183164"/>
<dbReference type="HOGENOM" id="CLU_181913_0_0_1"/>
<dbReference type="InParanoid" id="Q9UHQ7"/>
<dbReference type="OMA" id="KEDMFRN"/>
<dbReference type="OrthoDB" id="9836048at2759"/>
<dbReference type="PAN-GO" id="Q9UHQ7">
    <property type="GO annotations" value="2 GO annotations based on evolutionary models"/>
</dbReference>
<dbReference type="PhylomeDB" id="Q9UHQ7"/>
<dbReference type="PathwayCommons" id="Q9UHQ7"/>
<dbReference type="SignaLink" id="Q9UHQ7"/>
<dbReference type="BioGRID-ORCS" id="51186">
    <property type="hits" value="39 hits in 699 CRISPR screens"/>
</dbReference>
<dbReference type="ChiTaRS" id="TCEAL9">
    <property type="organism name" value="human"/>
</dbReference>
<dbReference type="GenomeRNAi" id="51186"/>
<dbReference type="Pharos" id="Q9UHQ7">
    <property type="development level" value="Tdark"/>
</dbReference>
<dbReference type="PRO" id="PR:Q9UHQ7"/>
<dbReference type="Proteomes" id="UP000005640">
    <property type="component" value="Chromosome X"/>
</dbReference>
<dbReference type="RNAct" id="Q9UHQ7">
    <property type="molecule type" value="protein"/>
</dbReference>
<dbReference type="Bgee" id="ENSG00000185222">
    <property type="expression patterns" value="Expressed in left ovary and 206 other cell types or tissues"/>
</dbReference>
<dbReference type="GO" id="GO:0005634">
    <property type="term" value="C:nucleus"/>
    <property type="evidence" value="ECO:0007669"/>
    <property type="project" value="UniProtKB-SubCell"/>
</dbReference>
<dbReference type="InterPro" id="IPR021156">
    <property type="entry name" value="TF_A-like/BEX"/>
</dbReference>
<dbReference type="Pfam" id="PF04538">
    <property type="entry name" value="BEX"/>
    <property type="match status" value="1"/>
</dbReference>
<gene>
    <name evidence="3" type="primary">TCEAL9</name>
    <name type="synonym">WBP5</name>
</gene>
<keyword id="KW-0539">Nucleus</keyword>
<keyword id="KW-1267">Proteomics identification</keyword>
<keyword id="KW-1185">Reference proteome</keyword>
<keyword id="KW-0804">Transcription</keyword>
<keyword id="KW-0805">Transcription regulation</keyword>
<comment type="function">
    <text evidence="2">May be involved in transcriptional regulation.</text>
</comment>
<comment type="subcellular location">
    <subcellularLocation>
        <location evidence="2">Nucleus</location>
    </subcellularLocation>
</comment>
<comment type="similarity">
    <text evidence="2">Belongs to the TFS-II family. TFA subfamily.</text>
</comment>
<proteinExistence type="evidence at protein level"/>
<feature type="chain" id="PRO_0000274046" description="Transcription elongation factor A protein-like 9">
    <location>
        <begin position="1"/>
        <end position="104"/>
    </location>
</feature>
<feature type="region of interest" description="Disordered" evidence="1">
    <location>
        <begin position="1"/>
        <end position="44"/>
    </location>
</feature>
<feature type="compositionally biased region" description="Basic and acidic residues" evidence="1">
    <location>
        <begin position="1"/>
        <end position="27"/>
    </location>
</feature>
<accession>Q9UHQ7</accession>
<accession>B2R5H6</accession>
<name>TCAL9_HUMAN</name>
<organism>
    <name type="scientific">Homo sapiens</name>
    <name type="common">Human</name>
    <dbReference type="NCBI Taxonomy" id="9606"/>
    <lineage>
        <taxon>Eukaryota</taxon>
        <taxon>Metazoa</taxon>
        <taxon>Chordata</taxon>
        <taxon>Craniata</taxon>
        <taxon>Vertebrata</taxon>
        <taxon>Euteleostomi</taxon>
        <taxon>Mammalia</taxon>
        <taxon>Eutheria</taxon>
        <taxon>Euarchontoglires</taxon>
        <taxon>Primates</taxon>
        <taxon>Haplorrhini</taxon>
        <taxon>Catarrhini</taxon>
        <taxon>Hominidae</taxon>
        <taxon>Homo</taxon>
    </lineage>
</organism>
<protein>
    <recommendedName>
        <fullName evidence="3">Transcription elongation factor A protein-like 9</fullName>
        <shortName>TCEA-like protein 9</shortName>
    </recommendedName>
    <alternativeName>
        <fullName>Transcription elongation factor S-II protein-like 9</fullName>
    </alternativeName>
    <alternativeName>
        <fullName>WW domain-binding protein 5</fullName>
        <shortName>WBP-5</shortName>
    </alternativeName>
</protein>
<sequence length="104" mass="12749">MKSCQKMEGKPENESEPKHEEEPKPEEKPEEEEKLEEEAKAKGTFRERLIQSLQEFKEDIHNRHLSNEDMFREVDEIDEIRRVRNKLIVMRWKVNRNHPYPYLM</sequence>
<evidence type="ECO:0000256" key="1">
    <source>
        <dbReference type="SAM" id="MobiDB-lite"/>
    </source>
</evidence>
<evidence type="ECO:0000305" key="2"/>
<evidence type="ECO:0000312" key="3">
    <source>
        <dbReference type="HGNC" id="HGNC:30084"/>
    </source>
</evidence>
<reference key="1">
    <citation type="journal article" date="2000" name="Proc. Natl. Acad. Sci. U.S.A.">
        <title>Gene expression profiling in the human hypothalamus-pituitary-adrenal axis and full-length cDNA cloning.</title>
        <authorList>
            <person name="Hu R.-M."/>
            <person name="Han Z.-G."/>
            <person name="Song H.-D."/>
            <person name="Peng Y.-D."/>
            <person name="Huang Q.-H."/>
            <person name="Ren S.-X."/>
            <person name="Gu Y.-J."/>
            <person name="Huang C.-H."/>
            <person name="Li Y.-B."/>
            <person name="Jiang C.-L."/>
            <person name="Fu G."/>
            <person name="Zhang Q.-H."/>
            <person name="Gu B.-W."/>
            <person name="Dai M."/>
            <person name="Mao Y.-F."/>
            <person name="Gao G.-F."/>
            <person name="Rong R."/>
            <person name="Ye M."/>
            <person name="Zhou J."/>
            <person name="Xu S.-H."/>
            <person name="Gu J."/>
            <person name="Shi J.-X."/>
            <person name="Jin W.-R."/>
            <person name="Zhang C.-K."/>
            <person name="Wu T.-M."/>
            <person name="Huang G.-Y."/>
            <person name="Chen Z."/>
            <person name="Chen M.-D."/>
            <person name="Chen J.-L."/>
        </authorList>
    </citation>
    <scope>NUCLEOTIDE SEQUENCE [LARGE SCALE MRNA]</scope>
    <source>
        <tissue>Adrenal gland</tissue>
    </source>
</reference>
<reference key="2">
    <citation type="journal article" date="2004" name="Nat. Genet.">
        <title>Complete sequencing and characterization of 21,243 full-length human cDNAs.</title>
        <authorList>
            <person name="Ota T."/>
            <person name="Suzuki Y."/>
            <person name="Nishikawa T."/>
            <person name="Otsuki T."/>
            <person name="Sugiyama T."/>
            <person name="Irie R."/>
            <person name="Wakamatsu A."/>
            <person name="Hayashi K."/>
            <person name="Sato H."/>
            <person name="Nagai K."/>
            <person name="Kimura K."/>
            <person name="Makita H."/>
            <person name="Sekine M."/>
            <person name="Obayashi M."/>
            <person name="Nishi T."/>
            <person name="Shibahara T."/>
            <person name="Tanaka T."/>
            <person name="Ishii S."/>
            <person name="Yamamoto J."/>
            <person name="Saito K."/>
            <person name="Kawai Y."/>
            <person name="Isono Y."/>
            <person name="Nakamura Y."/>
            <person name="Nagahari K."/>
            <person name="Murakami K."/>
            <person name="Yasuda T."/>
            <person name="Iwayanagi T."/>
            <person name="Wagatsuma M."/>
            <person name="Shiratori A."/>
            <person name="Sudo H."/>
            <person name="Hosoiri T."/>
            <person name="Kaku Y."/>
            <person name="Kodaira H."/>
            <person name="Kondo H."/>
            <person name="Sugawara M."/>
            <person name="Takahashi M."/>
            <person name="Kanda K."/>
            <person name="Yokoi T."/>
            <person name="Furuya T."/>
            <person name="Kikkawa E."/>
            <person name="Omura Y."/>
            <person name="Abe K."/>
            <person name="Kamihara K."/>
            <person name="Katsuta N."/>
            <person name="Sato K."/>
            <person name="Tanikawa M."/>
            <person name="Yamazaki M."/>
            <person name="Ninomiya K."/>
            <person name="Ishibashi T."/>
            <person name="Yamashita H."/>
            <person name="Murakawa K."/>
            <person name="Fujimori K."/>
            <person name="Tanai H."/>
            <person name="Kimata M."/>
            <person name="Watanabe M."/>
            <person name="Hiraoka S."/>
            <person name="Chiba Y."/>
            <person name="Ishida S."/>
            <person name="Ono Y."/>
            <person name="Takiguchi S."/>
            <person name="Watanabe S."/>
            <person name="Yosida M."/>
            <person name="Hotuta T."/>
            <person name="Kusano J."/>
            <person name="Kanehori K."/>
            <person name="Takahashi-Fujii A."/>
            <person name="Hara H."/>
            <person name="Tanase T.-O."/>
            <person name="Nomura Y."/>
            <person name="Togiya S."/>
            <person name="Komai F."/>
            <person name="Hara R."/>
            <person name="Takeuchi K."/>
            <person name="Arita M."/>
            <person name="Imose N."/>
            <person name="Musashino K."/>
            <person name="Yuuki H."/>
            <person name="Oshima A."/>
            <person name="Sasaki N."/>
            <person name="Aotsuka S."/>
            <person name="Yoshikawa Y."/>
            <person name="Matsunawa H."/>
            <person name="Ichihara T."/>
            <person name="Shiohata N."/>
            <person name="Sano S."/>
            <person name="Moriya S."/>
            <person name="Momiyama H."/>
            <person name="Satoh N."/>
            <person name="Takami S."/>
            <person name="Terashima Y."/>
            <person name="Suzuki O."/>
            <person name="Nakagawa S."/>
            <person name="Senoh A."/>
            <person name="Mizoguchi H."/>
            <person name="Goto Y."/>
            <person name="Shimizu F."/>
            <person name="Wakebe H."/>
            <person name="Hishigaki H."/>
            <person name="Watanabe T."/>
            <person name="Sugiyama A."/>
            <person name="Takemoto M."/>
            <person name="Kawakami B."/>
            <person name="Yamazaki M."/>
            <person name="Watanabe K."/>
            <person name="Kumagai A."/>
            <person name="Itakura S."/>
            <person name="Fukuzumi Y."/>
            <person name="Fujimori Y."/>
            <person name="Komiyama M."/>
            <person name="Tashiro H."/>
            <person name="Tanigami A."/>
            <person name="Fujiwara T."/>
            <person name="Ono T."/>
            <person name="Yamada K."/>
            <person name="Fujii Y."/>
            <person name="Ozaki K."/>
            <person name="Hirao M."/>
            <person name="Ohmori Y."/>
            <person name="Kawabata A."/>
            <person name="Hikiji T."/>
            <person name="Kobatake N."/>
            <person name="Inagaki H."/>
            <person name="Ikema Y."/>
            <person name="Okamoto S."/>
            <person name="Okitani R."/>
            <person name="Kawakami T."/>
            <person name="Noguchi S."/>
            <person name="Itoh T."/>
            <person name="Shigeta K."/>
            <person name="Senba T."/>
            <person name="Matsumura K."/>
            <person name="Nakajima Y."/>
            <person name="Mizuno T."/>
            <person name="Morinaga M."/>
            <person name="Sasaki M."/>
            <person name="Togashi T."/>
            <person name="Oyama M."/>
            <person name="Hata H."/>
            <person name="Watanabe M."/>
            <person name="Komatsu T."/>
            <person name="Mizushima-Sugano J."/>
            <person name="Satoh T."/>
            <person name="Shirai Y."/>
            <person name="Takahashi Y."/>
            <person name="Nakagawa K."/>
            <person name="Okumura K."/>
            <person name="Nagase T."/>
            <person name="Nomura N."/>
            <person name="Kikuchi H."/>
            <person name="Masuho Y."/>
            <person name="Yamashita R."/>
            <person name="Nakai K."/>
            <person name="Yada T."/>
            <person name="Nakamura Y."/>
            <person name="Ohara O."/>
            <person name="Isogai T."/>
            <person name="Sugano S."/>
        </authorList>
    </citation>
    <scope>NUCLEOTIDE SEQUENCE [LARGE SCALE MRNA]</scope>
</reference>
<reference key="3">
    <citation type="journal article" date="2005" name="Nature">
        <title>The DNA sequence of the human X chromosome.</title>
        <authorList>
            <person name="Ross M.T."/>
            <person name="Grafham D.V."/>
            <person name="Coffey A.J."/>
            <person name="Scherer S."/>
            <person name="McLay K."/>
            <person name="Muzny D."/>
            <person name="Platzer M."/>
            <person name="Howell G.R."/>
            <person name="Burrows C."/>
            <person name="Bird C.P."/>
            <person name="Frankish A."/>
            <person name="Lovell F.L."/>
            <person name="Howe K.L."/>
            <person name="Ashurst J.L."/>
            <person name="Fulton R.S."/>
            <person name="Sudbrak R."/>
            <person name="Wen G."/>
            <person name="Jones M.C."/>
            <person name="Hurles M.E."/>
            <person name="Andrews T.D."/>
            <person name="Scott C.E."/>
            <person name="Searle S."/>
            <person name="Ramser J."/>
            <person name="Whittaker A."/>
            <person name="Deadman R."/>
            <person name="Carter N.P."/>
            <person name="Hunt S.E."/>
            <person name="Chen R."/>
            <person name="Cree A."/>
            <person name="Gunaratne P."/>
            <person name="Havlak P."/>
            <person name="Hodgson A."/>
            <person name="Metzker M.L."/>
            <person name="Richards S."/>
            <person name="Scott G."/>
            <person name="Steffen D."/>
            <person name="Sodergren E."/>
            <person name="Wheeler D.A."/>
            <person name="Worley K.C."/>
            <person name="Ainscough R."/>
            <person name="Ambrose K.D."/>
            <person name="Ansari-Lari M.A."/>
            <person name="Aradhya S."/>
            <person name="Ashwell R.I."/>
            <person name="Babbage A.K."/>
            <person name="Bagguley C.L."/>
            <person name="Ballabio A."/>
            <person name="Banerjee R."/>
            <person name="Barker G.E."/>
            <person name="Barlow K.F."/>
            <person name="Barrett I.P."/>
            <person name="Bates K.N."/>
            <person name="Beare D.M."/>
            <person name="Beasley H."/>
            <person name="Beasley O."/>
            <person name="Beck A."/>
            <person name="Bethel G."/>
            <person name="Blechschmidt K."/>
            <person name="Brady N."/>
            <person name="Bray-Allen S."/>
            <person name="Bridgeman A.M."/>
            <person name="Brown A.J."/>
            <person name="Brown M.J."/>
            <person name="Bonnin D."/>
            <person name="Bruford E.A."/>
            <person name="Buhay C."/>
            <person name="Burch P."/>
            <person name="Burford D."/>
            <person name="Burgess J."/>
            <person name="Burrill W."/>
            <person name="Burton J."/>
            <person name="Bye J.M."/>
            <person name="Carder C."/>
            <person name="Carrel L."/>
            <person name="Chako J."/>
            <person name="Chapman J.C."/>
            <person name="Chavez D."/>
            <person name="Chen E."/>
            <person name="Chen G."/>
            <person name="Chen Y."/>
            <person name="Chen Z."/>
            <person name="Chinault C."/>
            <person name="Ciccodicola A."/>
            <person name="Clark S.Y."/>
            <person name="Clarke G."/>
            <person name="Clee C.M."/>
            <person name="Clegg S."/>
            <person name="Clerc-Blankenburg K."/>
            <person name="Clifford K."/>
            <person name="Cobley V."/>
            <person name="Cole C.G."/>
            <person name="Conquer J.S."/>
            <person name="Corby N."/>
            <person name="Connor R.E."/>
            <person name="David R."/>
            <person name="Davies J."/>
            <person name="Davis C."/>
            <person name="Davis J."/>
            <person name="Delgado O."/>
            <person name="Deshazo D."/>
            <person name="Dhami P."/>
            <person name="Ding Y."/>
            <person name="Dinh H."/>
            <person name="Dodsworth S."/>
            <person name="Draper H."/>
            <person name="Dugan-Rocha S."/>
            <person name="Dunham A."/>
            <person name="Dunn M."/>
            <person name="Durbin K.J."/>
            <person name="Dutta I."/>
            <person name="Eades T."/>
            <person name="Ellwood M."/>
            <person name="Emery-Cohen A."/>
            <person name="Errington H."/>
            <person name="Evans K.L."/>
            <person name="Faulkner L."/>
            <person name="Francis F."/>
            <person name="Frankland J."/>
            <person name="Fraser A.E."/>
            <person name="Galgoczy P."/>
            <person name="Gilbert J."/>
            <person name="Gill R."/>
            <person name="Gloeckner G."/>
            <person name="Gregory S.G."/>
            <person name="Gribble S."/>
            <person name="Griffiths C."/>
            <person name="Grocock R."/>
            <person name="Gu Y."/>
            <person name="Gwilliam R."/>
            <person name="Hamilton C."/>
            <person name="Hart E.A."/>
            <person name="Hawes A."/>
            <person name="Heath P.D."/>
            <person name="Heitmann K."/>
            <person name="Hennig S."/>
            <person name="Hernandez J."/>
            <person name="Hinzmann B."/>
            <person name="Ho S."/>
            <person name="Hoffs M."/>
            <person name="Howden P.J."/>
            <person name="Huckle E.J."/>
            <person name="Hume J."/>
            <person name="Hunt P.J."/>
            <person name="Hunt A.R."/>
            <person name="Isherwood J."/>
            <person name="Jacob L."/>
            <person name="Johnson D."/>
            <person name="Jones S."/>
            <person name="de Jong P.J."/>
            <person name="Joseph S.S."/>
            <person name="Keenan S."/>
            <person name="Kelly S."/>
            <person name="Kershaw J.K."/>
            <person name="Khan Z."/>
            <person name="Kioschis P."/>
            <person name="Klages S."/>
            <person name="Knights A.J."/>
            <person name="Kosiura A."/>
            <person name="Kovar-Smith C."/>
            <person name="Laird G.K."/>
            <person name="Langford C."/>
            <person name="Lawlor S."/>
            <person name="Leversha M."/>
            <person name="Lewis L."/>
            <person name="Liu W."/>
            <person name="Lloyd C."/>
            <person name="Lloyd D.M."/>
            <person name="Loulseged H."/>
            <person name="Loveland J.E."/>
            <person name="Lovell J.D."/>
            <person name="Lozado R."/>
            <person name="Lu J."/>
            <person name="Lyne R."/>
            <person name="Ma J."/>
            <person name="Maheshwari M."/>
            <person name="Matthews L.H."/>
            <person name="McDowall J."/>
            <person name="McLaren S."/>
            <person name="McMurray A."/>
            <person name="Meidl P."/>
            <person name="Meitinger T."/>
            <person name="Milne S."/>
            <person name="Miner G."/>
            <person name="Mistry S.L."/>
            <person name="Morgan M."/>
            <person name="Morris S."/>
            <person name="Mueller I."/>
            <person name="Mullikin J.C."/>
            <person name="Nguyen N."/>
            <person name="Nordsiek G."/>
            <person name="Nyakatura G."/>
            <person name="O'dell C.N."/>
            <person name="Okwuonu G."/>
            <person name="Palmer S."/>
            <person name="Pandian R."/>
            <person name="Parker D."/>
            <person name="Parrish J."/>
            <person name="Pasternak S."/>
            <person name="Patel D."/>
            <person name="Pearce A.V."/>
            <person name="Pearson D.M."/>
            <person name="Pelan S.E."/>
            <person name="Perez L."/>
            <person name="Porter K.M."/>
            <person name="Ramsey Y."/>
            <person name="Reichwald K."/>
            <person name="Rhodes S."/>
            <person name="Ridler K.A."/>
            <person name="Schlessinger D."/>
            <person name="Schueler M.G."/>
            <person name="Sehra H.K."/>
            <person name="Shaw-Smith C."/>
            <person name="Shen H."/>
            <person name="Sheridan E.M."/>
            <person name="Shownkeen R."/>
            <person name="Skuce C.D."/>
            <person name="Smith M.L."/>
            <person name="Sotheran E.C."/>
            <person name="Steingruber H.E."/>
            <person name="Steward C.A."/>
            <person name="Storey R."/>
            <person name="Swann R.M."/>
            <person name="Swarbreck D."/>
            <person name="Tabor P.E."/>
            <person name="Taudien S."/>
            <person name="Taylor T."/>
            <person name="Teague B."/>
            <person name="Thomas K."/>
            <person name="Thorpe A."/>
            <person name="Timms K."/>
            <person name="Tracey A."/>
            <person name="Trevanion S."/>
            <person name="Tromans A.C."/>
            <person name="d'Urso M."/>
            <person name="Verduzco D."/>
            <person name="Villasana D."/>
            <person name="Waldron L."/>
            <person name="Wall M."/>
            <person name="Wang Q."/>
            <person name="Warren J."/>
            <person name="Warry G.L."/>
            <person name="Wei X."/>
            <person name="West A."/>
            <person name="Whitehead S.L."/>
            <person name="Whiteley M.N."/>
            <person name="Wilkinson J.E."/>
            <person name="Willey D.L."/>
            <person name="Williams G."/>
            <person name="Williams L."/>
            <person name="Williamson A."/>
            <person name="Williamson H."/>
            <person name="Wilming L."/>
            <person name="Woodmansey R.L."/>
            <person name="Wray P.W."/>
            <person name="Yen J."/>
            <person name="Zhang J."/>
            <person name="Zhou J."/>
            <person name="Zoghbi H."/>
            <person name="Zorilla S."/>
            <person name="Buck D."/>
            <person name="Reinhardt R."/>
            <person name="Poustka A."/>
            <person name="Rosenthal A."/>
            <person name="Lehrach H."/>
            <person name="Meindl A."/>
            <person name="Minx P.J."/>
            <person name="Hillier L.W."/>
            <person name="Willard H.F."/>
            <person name="Wilson R.K."/>
            <person name="Waterston R.H."/>
            <person name="Rice C.M."/>
            <person name="Vaudin M."/>
            <person name="Coulson A."/>
            <person name="Nelson D.L."/>
            <person name="Weinstock G."/>
            <person name="Sulston J.E."/>
            <person name="Durbin R.M."/>
            <person name="Hubbard T."/>
            <person name="Gibbs R.A."/>
            <person name="Beck S."/>
            <person name="Rogers J."/>
            <person name="Bentley D.R."/>
        </authorList>
    </citation>
    <scope>NUCLEOTIDE SEQUENCE [LARGE SCALE GENOMIC DNA]</scope>
</reference>
<reference key="4">
    <citation type="submission" date="2005-09" db="EMBL/GenBank/DDBJ databases">
        <authorList>
            <person name="Mural R.J."/>
            <person name="Istrail S."/>
            <person name="Sutton G.G."/>
            <person name="Florea L."/>
            <person name="Halpern A.L."/>
            <person name="Mobarry C.M."/>
            <person name="Lippert R."/>
            <person name="Walenz B."/>
            <person name="Shatkay H."/>
            <person name="Dew I."/>
            <person name="Miller J.R."/>
            <person name="Flanigan M.J."/>
            <person name="Edwards N.J."/>
            <person name="Bolanos R."/>
            <person name="Fasulo D."/>
            <person name="Halldorsson B.V."/>
            <person name="Hannenhalli S."/>
            <person name="Turner R."/>
            <person name="Yooseph S."/>
            <person name="Lu F."/>
            <person name="Nusskern D.R."/>
            <person name="Shue B.C."/>
            <person name="Zheng X.H."/>
            <person name="Zhong F."/>
            <person name="Delcher A.L."/>
            <person name="Huson D.H."/>
            <person name="Kravitz S.A."/>
            <person name="Mouchard L."/>
            <person name="Reinert K."/>
            <person name="Remington K.A."/>
            <person name="Clark A.G."/>
            <person name="Waterman M.S."/>
            <person name="Eichler E.E."/>
            <person name="Adams M.D."/>
            <person name="Hunkapiller M.W."/>
            <person name="Myers E.W."/>
            <person name="Venter J.C."/>
        </authorList>
    </citation>
    <scope>NUCLEOTIDE SEQUENCE [LARGE SCALE GENOMIC DNA]</scope>
</reference>
<reference key="5">
    <citation type="journal article" date="2004" name="Genome Res.">
        <title>The status, quality, and expansion of the NIH full-length cDNA project: the Mammalian Gene Collection (MGC).</title>
        <authorList>
            <consortium name="The MGC Project Team"/>
        </authorList>
    </citation>
    <scope>NUCLEOTIDE SEQUENCE [LARGE SCALE MRNA]</scope>
    <source>
        <tissue>Muscle</tissue>
    </source>
</reference>